<sequence length="210" mass="23641">MRNVQIALTKGRLEKHVIPLFEQIGMDCSEMMDKGRKLTFKSNNSNVSFILVKAVDVATYVEHGVADIGIVGKDILMEYEKDVYEMIDLQVGCCKLCIASIPAYDPKKYRKKRIATKYPSITSRYFCDKGEDVEIIKIEGSVEIAPLLGLVDAIVDIVETGKTLQENGLIVLEEMYPISARMIVNKAALKMKKDEIFNIINKIECIVSKK</sequence>
<accession>A7GMU5</accession>
<feature type="chain" id="PRO_1000084152" description="ATP phosphoribosyltransferase">
    <location>
        <begin position="1"/>
        <end position="210"/>
    </location>
</feature>
<protein>
    <recommendedName>
        <fullName evidence="1">ATP phosphoribosyltransferase</fullName>
        <shortName evidence="1">ATP-PRT</shortName>
        <shortName evidence="1">ATP-PRTase</shortName>
        <ecNumber evidence="1">2.4.2.17</ecNumber>
    </recommendedName>
</protein>
<keyword id="KW-0028">Amino-acid biosynthesis</keyword>
<keyword id="KW-0067">ATP-binding</keyword>
<keyword id="KW-0963">Cytoplasm</keyword>
<keyword id="KW-0328">Glycosyltransferase</keyword>
<keyword id="KW-0368">Histidine biosynthesis</keyword>
<keyword id="KW-0547">Nucleotide-binding</keyword>
<keyword id="KW-0808">Transferase</keyword>
<name>HIS1_BACCN</name>
<evidence type="ECO:0000255" key="1">
    <source>
        <dbReference type="HAMAP-Rule" id="MF_01018"/>
    </source>
</evidence>
<comment type="function">
    <text evidence="1">Catalyzes the condensation of ATP and 5-phosphoribose 1-diphosphate to form N'-(5'-phosphoribosyl)-ATP (PR-ATP). Has a crucial role in the pathway because the rate of histidine biosynthesis seems to be controlled primarily by regulation of HisG enzymatic activity.</text>
</comment>
<comment type="catalytic activity">
    <reaction evidence="1">
        <text>1-(5-phospho-beta-D-ribosyl)-ATP + diphosphate = 5-phospho-alpha-D-ribose 1-diphosphate + ATP</text>
        <dbReference type="Rhea" id="RHEA:18473"/>
        <dbReference type="ChEBI" id="CHEBI:30616"/>
        <dbReference type="ChEBI" id="CHEBI:33019"/>
        <dbReference type="ChEBI" id="CHEBI:58017"/>
        <dbReference type="ChEBI" id="CHEBI:73183"/>
        <dbReference type="EC" id="2.4.2.17"/>
    </reaction>
</comment>
<comment type="pathway">
    <text evidence="1">Amino-acid biosynthesis; L-histidine biosynthesis; L-histidine from 5-phospho-alpha-D-ribose 1-diphosphate: step 1/9.</text>
</comment>
<comment type="subunit">
    <text evidence="1">Heteromultimer composed of HisG and HisZ subunits.</text>
</comment>
<comment type="subcellular location">
    <subcellularLocation>
        <location evidence="1">Cytoplasm</location>
    </subcellularLocation>
</comment>
<comment type="domain">
    <text>Lacks the C-terminal regulatory region which is replaced by HisZ.</text>
</comment>
<comment type="similarity">
    <text evidence="1">Belongs to the ATP phosphoribosyltransferase family. Short subfamily.</text>
</comment>
<gene>
    <name evidence="1" type="primary">hisG</name>
    <name type="ordered locus">Bcer98_1128</name>
</gene>
<dbReference type="EC" id="2.4.2.17" evidence="1"/>
<dbReference type="EMBL" id="CP000764">
    <property type="protein sequence ID" value="ABS21453.1"/>
    <property type="molecule type" value="Genomic_DNA"/>
</dbReference>
<dbReference type="RefSeq" id="WP_011984206.1">
    <property type="nucleotide sequence ID" value="NC_009674.1"/>
</dbReference>
<dbReference type="SMR" id="A7GMU5"/>
<dbReference type="STRING" id="315749.Bcer98_1128"/>
<dbReference type="GeneID" id="33896484"/>
<dbReference type="KEGG" id="bcy:Bcer98_1128"/>
<dbReference type="eggNOG" id="COG0040">
    <property type="taxonomic scope" value="Bacteria"/>
</dbReference>
<dbReference type="HOGENOM" id="CLU_038115_2_0_9"/>
<dbReference type="OrthoDB" id="9801867at2"/>
<dbReference type="UniPathway" id="UPA00031">
    <property type="reaction ID" value="UER00006"/>
</dbReference>
<dbReference type="Proteomes" id="UP000002300">
    <property type="component" value="Chromosome"/>
</dbReference>
<dbReference type="GO" id="GO:0005737">
    <property type="term" value="C:cytoplasm"/>
    <property type="evidence" value="ECO:0007669"/>
    <property type="project" value="UniProtKB-SubCell"/>
</dbReference>
<dbReference type="GO" id="GO:0005524">
    <property type="term" value="F:ATP binding"/>
    <property type="evidence" value="ECO:0007669"/>
    <property type="project" value="UniProtKB-KW"/>
</dbReference>
<dbReference type="GO" id="GO:0003879">
    <property type="term" value="F:ATP phosphoribosyltransferase activity"/>
    <property type="evidence" value="ECO:0007669"/>
    <property type="project" value="UniProtKB-UniRule"/>
</dbReference>
<dbReference type="GO" id="GO:0000105">
    <property type="term" value="P:L-histidine biosynthetic process"/>
    <property type="evidence" value="ECO:0007669"/>
    <property type="project" value="UniProtKB-UniRule"/>
</dbReference>
<dbReference type="CDD" id="cd13595">
    <property type="entry name" value="PBP2_HisGs"/>
    <property type="match status" value="1"/>
</dbReference>
<dbReference type="FunFam" id="3.40.190.10:FF:000008">
    <property type="entry name" value="ATP phosphoribosyltransferase"/>
    <property type="match status" value="1"/>
</dbReference>
<dbReference type="FunFam" id="3.40.190.10:FF:000011">
    <property type="entry name" value="ATP phosphoribosyltransferase"/>
    <property type="match status" value="1"/>
</dbReference>
<dbReference type="Gene3D" id="3.40.190.10">
    <property type="entry name" value="Periplasmic binding protein-like II"/>
    <property type="match status" value="2"/>
</dbReference>
<dbReference type="HAMAP" id="MF_01018">
    <property type="entry name" value="HisG_Short"/>
    <property type="match status" value="1"/>
</dbReference>
<dbReference type="InterPro" id="IPR013820">
    <property type="entry name" value="ATP_PRibTrfase_cat"/>
</dbReference>
<dbReference type="InterPro" id="IPR001348">
    <property type="entry name" value="ATP_PRibTrfase_HisG"/>
</dbReference>
<dbReference type="InterPro" id="IPR024893">
    <property type="entry name" value="ATP_PRibTrfase_HisG_short"/>
</dbReference>
<dbReference type="NCBIfam" id="TIGR00070">
    <property type="entry name" value="hisG"/>
    <property type="match status" value="1"/>
</dbReference>
<dbReference type="PANTHER" id="PTHR21403:SF8">
    <property type="entry name" value="ATP PHOSPHORIBOSYLTRANSFERASE"/>
    <property type="match status" value="1"/>
</dbReference>
<dbReference type="PANTHER" id="PTHR21403">
    <property type="entry name" value="ATP PHOSPHORIBOSYLTRANSFERASE ATP-PRTASE"/>
    <property type="match status" value="1"/>
</dbReference>
<dbReference type="Pfam" id="PF01634">
    <property type="entry name" value="HisG"/>
    <property type="match status" value="1"/>
</dbReference>
<dbReference type="SUPFAM" id="SSF53850">
    <property type="entry name" value="Periplasmic binding protein-like II"/>
    <property type="match status" value="1"/>
</dbReference>
<organism>
    <name type="scientific">Bacillus cytotoxicus (strain DSM 22905 / CIP 110041 / 391-98 / NVH 391-98)</name>
    <dbReference type="NCBI Taxonomy" id="315749"/>
    <lineage>
        <taxon>Bacteria</taxon>
        <taxon>Bacillati</taxon>
        <taxon>Bacillota</taxon>
        <taxon>Bacilli</taxon>
        <taxon>Bacillales</taxon>
        <taxon>Bacillaceae</taxon>
        <taxon>Bacillus</taxon>
        <taxon>Bacillus cereus group</taxon>
    </lineage>
</organism>
<proteinExistence type="inferred from homology"/>
<reference key="1">
    <citation type="journal article" date="2008" name="Chem. Biol. Interact.">
        <title>Extending the Bacillus cereus group genomics to putative food-borne pathogens of different toxicity.</title>
        <authorList>
            <person name="Lapidus A."/>
            <person name="Goltsman E."/>
            <person name="Auger S."/>
            <person name="Galleron N."/>
            <person name="Segurens B."/>
            <person name="Dossat C."/>
            <person name="Land M.L."/>
            <person name="Broussolle V."/>
            <person name="Brillard J."/>
            <person name="Guinebretiere M.-H."/>
            <person name="Sanchis V."/>
            <person name="Nguen-the C."/>
            <person name="Lereclus D."/>
            <person name="Richardson P."/>
            <person name="Wincker P."/>
            <person name="Weissenbach J."/>
            <person name="Ehrlich S.D."/>
            <person name="Sorokin A."/>
        </authorList>
    </citation>
    <scope>NUCLEOTIDE SEQUENCE [LARGE SCALE GENOMIC DNA]</scope>
    <source>
        <strain>DSM 22905 / CIP 110041 / 391-98 / NVH 391-98</strain>
    </source>
</reference>